<proteinExistence type="inferred from homology"/>
<protein>
    <recommendedName>
        <fullName evidence="1">CinA-like protein</fullName>
    </recommendedName>
</protein>
<keyword id="KW-1185">Reference proteome</keyword>
<comment type="similarity">
    <text evidence="1">Belongs to the CinA family.</text>
</comment>
<comment type="sequence caution" evidence="2">
    <conflict type="erroneous initiation">
        <sequence resource="EMBL-CDS" id="BAC09681"/>
    </conflict>
</comment>
<gene>
    <name type="ordered locus">tlr2129</name>
</gene>
<evidence type="ECO:0000255" key="1">
    <source>
        <dbReference type="HAMAP-Rule" id="MF_00226"/>
    </source>
</evidence>
<evidence type="ECO:0000305" key="2"/>
<dbReference type="EMBL" id="BA000039">
    <property type="protein sequence ID" value="BAC09681.1"/>
    <property type="status" value="ALT_INIT"/>
    <property type="molecule type" value="Genomic_DNA"/>
</dbReference>
<dbReference type="RefSeq" id="NP_682919.1">
    <property type="nucleotide sequence ID" value="NC_004113.1"/>
</dbReference>
<dbReference type="RefSeq" id="WP_164921222.1">
    <property type="nucleotide sequence ID" value="NC_004113.1"/>
</dbReference>
<dbReference type="SMR" id="Q8DH31"/>
<dbReference type="STRING" id="197221.gene:10748740"/>
<dbReference type="EnsemblBacteria" id="BAC09681">
    <property type="protein sequence ID" value="BAC09681"/>
    <property type="gene ID" value="BAC09681"/>
</dbReference>
<dbReference type="KEGG" id="tel:tlr2129"/>
<dbReference type="PATRIC" id="fig|197221.4.peg.2229"/>
<dbReference type="eggNOG" id="COG1058">
    <property type="taxonomic scope" value="Bacteria"/>
</dbReference>
<dbReference type="eggNOG" id="COG1546">
    <property type="taxonomic scope" value="Bacteria"/>
</dbReference>
<dbReference type="Proteomes" id="UP000000440">
    <property type="component" value="Chromosome"/>
</dbReference>
<dbReference type="CDD" id="cd00885">
    <property type="entry name" value="cinA"/>
    <property type="match status" value="1"/>
</dbReference>
<dbReference type="Gene3D" id="3.30.70.2860">
    <property type="match status" value="1"/>
</dbReference>
<dbReference type="Gene3D" id="3.90.950.20">
    <property type="entry name" value="CinA-like"/>
    <property type="match status" value="1"/>
</dbReference>
<dbReference type="Gene3D" id="3.40.980.10">
    <property type="entry name" value="MoaB/Mog-like domain"/>
    <property type="match status" value="1"/>
</dbReference>
<dbReference type="HAMAP" id="MF_00226_B">
    <property type="entry name" value="CinA_B"/>
    <property type="match status" value="1"/>
</dbReference>
<dbReference type="InterPro" id="IPR050101">
    <property type="entry name" value="CinA"/>
</dbReference>
<dbReference type="InterPro" id="IPR036653">
    <property type="entry name" value="CinA-like_C"/>
</dbReference>
<dbReference type="InterPro" id="IPR008136">
    <property type="entry name" value="CinA_C"/>
</dbReference>
<dbReference type="InterPro" id="IPR041424">
    <property type="entry name" value="CinA_KH"/>
</dbReference>
<dbReference type="InterPro" id="IPR008135">
    <property type="entry name" value="Competence-induced_CinA"/>
</dbReference>
<dbReference type="InterPro" id="IPR036425">
    <property type="entry name" value="MoaB/Mog-like_dom_sf"/>
</dbReference>
<dbReference type="InterPro" id="IPR001453">
    <property type="entry name" value="MoaB/Mog_dom"/>
</dbReference>
<dbReference type="NCBIfam" id="TIGR00200">
    <property type="entry name" value="cinA_nterm"/>
    <property type="match status" value="1"/>
</dbReference>
<dbReference type="NCBIfam" id="TIGR00177">
    <property type="entry name" value="molyb_syn"/>
    <property type="match status" value="1"/>
</dbReference>
<dbReference type="NCBIfam" id="TIGR00199">
    <property type="entry name" value="PncC_domain"/>
    <property type="match status" value="1"/>
</dbReference>
<dbReference type="NCBIfam" id="NF001813">
    <property type="entry name" value="PRK00549.1"/>
    <property type="match status" value="1"/>
</dbReference>
<dbReference type="PANTHER" id="PTHR13939">
    <property type="entry name" value="NICOTINAMIDE-NUCLEOTIDE AMIDOHYDROLASE PNCC"/>
    <property type="match status" value="1"/>
</dbReference>
<dbReference type="PANTHER" id="PTHR13939:SF0">
    <property type="entry name" value="NMN AMIDOHYDROLASE-LIKE PROTEIN YFAY"/>
    <property type="match status" value="1"/>
</dbReference>
<dbReference type="Pfam" id="PF02464">
    <property type="entry name" value="CinA"/>
    <property type="match status" value="1"/>
</dbReference>
<dbReference type="Pfam" id="PF18146">
    <property type="entry name" value="CinA_KH"/>
    <property type="match status" value="1"/>
</dbReference>
<dbReference type="Pfam" id="PF00994">
    <property type="entry name" value="MoCF_biosynth"/>
    <property type="match status" value="1"/>
</dbReference>
<dbReference type="PIRSF" id="PIRSF006728">
    <property type="entry name" value="CinA"/>
    <property type="match status" value="1"/>
</dbReference>
<dbReference type="SMART" id="SM00852">
    <property type="entry name" value="MoCF_biosynth"/>
    <property type="match status" value="1"/>
</dbReference>
<dbReference type="SUPFAM" id="SSF142433">
    <property type="entry name" value="CinA-like"/>
    <property type="match status" value="1"/>
</dbReference>
<dbReference type="SUPFAM" id="SSF53218">
    <property type="entry name" value="Molybdenum cofactor biosynthesis proteins"/>
    <property type="match status" value="1"/>
</dbReference>
<organism>
    <name type="scientific">Thermosynechococcus vestitus (strain NIES-2133 / IAM M-273 / BP-1)</name>
    <dbReference type="NCBI Taxonomy" id="197221"/>
    <lineage>
        <taxon>Bacteria</taxon>
        <taxon>Bacillati</taxon>
        <taxon>Cyanobacteriota</taxon>
        <taxon>Cyanophyceae</taxon>
        <taxon>Acaryochloridales</taxon>
        <taxon>Thermosynechococcaceae</taxon>
        <taxon>Thermosynechococcus</taxon>
    </lineage>
</organism>
<accession>Q8DH31</accession>
<name>CINAL_THEVB</name>
<sequence>MSAEIICVGTELLLGEILNSNAQFLAQQLASLGIPHYYQTVVGDNPTRIKKVVAIACDRARLLIFTGGLGPTPDDLTTETLADFFATPLEERPEILADLERKYAHRGGFSPSNRKQALLPVGAQILPNPLGTAPGMIWQPRTGLTILTFPGVPAEMKQMWHETAVPFLCSQGWGKEVIYSRVLRFWGIPESMLAEKVAAQIAREHPTVAPYASNGEARLRITVRAKDEAEAQQLIQPVEAEIRQIIGLDCYGADEDTLAGVVARLLQERQQTVAVAESCTGGGLGEMLTRLPGSSLYFKGGVIAYANEIKVTLLGVNPEELEREGAVSAAVAAQMALGVKTRLASDWGVSITGIAGPGGATLRKPVGLVYIGVALPNGEVISREFRFSGQRGRDWVRYLSTMNALDLLRRQLLVNP</sequence>
<feature type="chain" id="PRO_0000156782" description="CinA-like protein">
    <location>
        <begin position="1"/>
        <end position="416"/>
    </location>
</feature>
<reference key="1">
    <citation type="journal article" date="2002" name="DNA Res.">
        <title>Complete genome structure of the thermophilic cyanobacterium Thermosynechococcus elongatus BP-1.</title>
        <authorList>
            <person name="Nakamura Y."/>
            <person name="Kaneko T."/>
            <person name="Sato S."/>
            <person name="Ikeuchi M."/>
            <person name="Katoh H."/>
            <person name="Sasamoto S."/>
            <person name="Watanabe A."/>
            <person name="Iriguchi M."/>
            <person name="Kawashima K."/>
            <person name="Kimura T."/>
            <person name="Kishida Y."/>
            <person name="Kiyokawa C."/>
            <person name="Kohara M."/>
            <person name="Matsumoto M."/>
            <person name="Matsuno A."/>
            <person name="Nakazaki N."/>
            <person name="Shimpo S."/>
            <person name="Sugimoto M."/>
            <person name="Takeuchi C."/>
            <person name="Yamada M."/>
            <person name="Tabata S."/>
        </authorList>
    </citation>
    <scope>NUCLEOTIDE SEQUENCE [LARGE SCALE GENOMIC DNA]</scope>
    <source>
        <strain>NIES-2133 / IAM M-273 / BP-1</strain>
    </source>
</reference>